<protein>
    <recommendedName>
        <fullName evidence="1">Catalase-peroxidase</fullName>
        <shortName evidence="1">CP</shortName>
        <ecNumber evidence="1">1.11.1.21</ecNumber>
    </recommendedName>
    <alternativeName>
        <fullName evidence="1">Peroxidase/catalase</fullName>
    </alternativeName>
</protein>
<sequence>MDGNDLVENKCPVMHGGITVAGHSNTAWWPETLNLEILHQHDTKVSPLGKDFNYRDAVKSLDFEALKKDMHDLMTNSQDWWPADYGHYGGLMIRLAWHSAGSYRLADGRGGGNTGNIRFAPLNSWPDNGNLDKARRLLWPIKKKYGNKISWADLILLSGTIAYESMGLKTYGFSFGREDIWAPEKDVYWGAEKEWLAPSDERYTDVDKPETMENPLAAVQMGLIYVNPEGVNGKSDPLKSAAQVRETFARMAMNDEETAALTCGGHTVGKAHGNGDAGKLSPPPEGNDLETQGFGWMNPNMDGKATNAVTSGIEGAWTTHPTKWDMGYFHLLFGYEWELTKSPAGASQWRPINIKEEDMPVDPTDPTKRVMPMMTDADMAMKMDPAYNAICQKFMADQAYFSDTFARAWFKLTHRDLGPRVRYIGPDAPQEDLIWQDPVPAGSKSYDVAAVKAKIADSGLSLSEMVSTAWDSARTFRGSDLRGGANGARIRLAPQKDWAGNEPARLQKVLSVLEPIASATGASVADVIVLAGNVGVEQAAKAAGFDISVPFSPGRGDATAEMTDADSFESLEPYADGFRNWQKEDYVVKPEELLLDRAQLLGLTGPEMTVLLGGMRVMGTNHGGTKHGVFTDKVGALTNDFFVNLTDMANKWVPRGKNAYDITDRKSGAVKFTATRADLVFGSNSILRAYAEIYAQDDAKEKFVKDFVAAWSKVMDADRFDLA</sequence>
<proteinExistence type="inferred from homology"/>
<dbReference type="EC" id="1.11.1.21" evidence="1"/>
<dbReference type="EMBL" id="CP000158">
    <property type="protein sequence ID" value="ABI78396.1"/>
    <property type="molecule type" value="Genomic_DNA"/>
</dbReference>
<dbReference type="RefSeq" id="WP_011647110.1">
    <property type="nucleotide sequence ID" value="NC_008358.1"/>
</dbReference>
<dbReference type="SMR" id="Q0C0D1"/>
<dbReference type="STRING" id="228405.HNE_2115"/>
<dbReference type="KEGG" id="hne:HNE_2115"/>
<dbReference type="eggNOG" id="COG0376">
    <property type="taxonomic scope" value="Bacteria"/>
</dbReference>
<dbReference type="HOGENOM" id="CLU_025424_2_0_5"/>
<dbReference type="Proteomes" id="UP000001959">
    <property type="component" value="Chromosome"/>
</dbReference>
<dbReference type="GO" id="GO:0005829">
    <property type="term" value="C:cytosol"/>
    <property type="evidence" value="ECO:0007669"/>
    <property type="project" value="TreeGrafter"/>
</dbReference>
<dbReference type="GO" id="GO:0004096">
    <property type="term" value="F:catalase activity"/>
    <property type="evidence" value="ECO:0007669"/>
    <property type="project" value="UniProtKB-UniRule"/>
</dbReference>
<dbReference type="GO" id="GO:0020037">
    <property type="term" value="F:heme binding"/>
    <property type="evidence" value="ECO:0007669"/>
    <property type="project" value="InterPro"/>
</dbReference>
<dbReference type="GO" id="GO:0046872">
    <property type="term" value="F:metal ion binding"/>
    <property type="evidence" value="ECO:0007669"/>
    <property type="project" value="UniProtKB-KW"/>
</dbReference>
<dbReference type="GO" id="GO:0070301">
    <property type="term" value="P:cellular response to hydrogen peroxide"/>
    <property type="evidence" value="ECO:0007669"/>
    <property type="project" value="TreeGrafter"/>
</dbReference>
<dbReference type="GO" id="GO:0042744">
    <property type="term" value="P:hydrogen peroxide catabolic process"/>
    <property type="evidence" value="ECO:0007669"/>
    <property type="project" value="UniProtKB-KW"/>
</dbReference>
<dbReference type="CDD" id="cd00649">
    <property type="entry name" value="catalase_peroxidase_1"/>
    <property type="match status" value="1"/>
</dbReference>
<dbReference type="CDD" id="cd08200">
    <property type="entry name" value="catalase_peroxidase_2"/>
    <property type="match status" value="1"/>
</dbReference>
<dbReference type="FunFam" id="1.10.420.10:FF:000004">
    <property type="entry name" value="Catalase-peroxidase"/>
    <property type="match status" value="1"/>
</dbReference>
<dbReference type="FunFam" id="1.10.520.10:FF:000002">
    <property type="entry name" value="Catalase-peroxidase"/>
    <property type="match status" value="1"/>
</dbReference>
<dbReference type="Gene3D" id="1.10.520.10">
    <property type="match status" value="2"/>
</dbReference>
<dbReference type="Gene3D" id="1.10.420.10">
    <property type="entry name" value="Peroxidase, domain 2"/>
    <property type="match status" value="2"/>
</dbReference>
<dbReference type="HAMAP" id="MF_01961">
    <property type="entry name" value="Catal_peroxid"/>
    <property type="match status" value="1"/>
</dbReference>
<dbReference type="InterPro" id="IPR000763">
    <property type="entry name" value="Catalase_peroxidase"/>
</dbReference>
<dbReference type="InterPro" id="IPR002016">
    <property type="entry name" value="Haem_peroxidase"/>
</dbReference>
<dbReference type="InterPro" id="IPR010255">
    <property type="entry name" value="Haem_peroxidase_sf"/>
</dbReference>
<dbReference type="InterPro" id="IPR019794">
    <property type="entry name" value="Peroxidases_AS"/>
</dbReference>
<dbReference type="NCBIfam" id="TIGR00198">
    <property type="entry name" value="cat_per_HPI"/>
    <property type="match status" value="1"/>
</dbReference>
<dbReference type="NCBIfam" id="NF011635">
    <property type="entry name" value="PRK15061.1"/>
    <property type="match status" value="1"/>
</dbReference>
<dbReference type="PANTHER" id="PTHR30555:SF6">
    <property type="entry name" value="CATALASE-PEROXIDASE"/>
    <property type="match status" value="1"/>
</dbReference>
<dbReference type="PANTHER" id="PTHR30555">
    <property type="entry name" value="HYDROPEROXIDASE I, BIFUNCTIONAL CATALASE-PEROXIDASE"/>
    <property type="match status" value="1"/>
</dbReference>
<dbReference type="Pfam" id="PF00141">
    <property type="entry name" value="peroxidase"/>
    <property type="match status" value="2"/>
</dbReference>
<dbReference type="PRINTS" id="PR00460">
    <property type="entry name" value="BPEROXIDASE"/>
</dbReference>
<dbReference type="PRINTS" id="PR00458">
    <property type="entry name" value="PEROXIDASE"/>
</dbReference>
<dbReference type="SUPFAM" id="SSF48113">
    <property type="entry name" value="Heme-dependent peroxidases"/>
    <property type="match status" value="2"/>
</dbReference>
<dbReference type="PROSITE" id="PS00436">
    <property type="entry name" value="PEROXIDASE_2"/>
    <property type="match status" value="1"/>
</dbReference>
<dbReference type="PROSITE" id="PS50873">
    <property type="entry name" value="PEROXIDASE_4"/>
    <property type="match status" value="1"/>
</dbReference>
<keyword id="KW-0349">Heme</keyword>
<keyword id="KW-0376">Hydrogen peroxide</keyword>
<keyword id="KW-0408">Iron</keyword>
<keyword id="KW-0479">Metal-binding</keyword>
<keyword id="KW-0560">Oxidoreductase</keyword>
<keyword id="KW-0575">Peroxidase</keyword>
<keyword id="KW-1185">Reference proteome</keyword>
<keyword id="KW-0732">Signal</keyword>
<organism>
    <name type="scientific">Hyphomonas neptunium (strain ATCC 15444)</name>
    <dbReference type="NCBI Taxonomy" id="228405"/>
    <lineage>
        <taxon>Bacteria</taxon>
        <taxon>Pseudomonadati</taxon>
        <taxon>Pseudomonadota</taxon>
        <taxon>Alphaproteobacteria</taxon>
        <taxon>Hyphomonadales</taxon>
        <taxon>Hyphomonadaceae</taxon>
        <taxon>Hyphomonas</taxon>
    </lineage>
</organism>
<gene>
    <name evidence="1" type="primary">katG</name>
    <name type="ordered locus">HNE_2115</name>
</gene>
<feature type="signal peptide" evidence="1">
    <location>
        <begin position="1"/>
        <end position="29"/>
    </location>
</feature>
<feature type="chain" id="PRO_0000354809" description="Catalase-peroxidase">
    <location>
        <begin position="30"/>
        <end position="723"/>
    </location>
</feature>
<feature type="active site" description="Proton acceptor" evidence="1">
    <location>
        <position position="98"/>
    </location>
</feature>
<feature type="binding site" description="axial binding residue" evidence="1">
    <location>
        <position position="266"/>
    </location>
    <ligand>
        <name>heme b</name>
        <dbReference type="ChEBI" id="CHEBI:60344"/>
    </ligand>
    <ligandPart>
        <name>Fe</name>
        <dbReference type="ChEBI" id="CHEBI:18248"/>
    </ligandPart>
</feature>
<feature type="site" description="Transition state stabilizer" evidence="1">
    <location>
        <position position="94"/>
    </location>
</feature>
<feature type="cross-link" description="Tryptophyl-tyrosyl-methioninium (Trp-Tyr) (with M-251)" evidence="1">
    <location>
        <begin position="97"/>
        <end position="225"/>
    </location>
</feature>
<feature type="cross-link" description="Tryptophyl-tyrosyl-methioninium (Tyr-Met) (with W-97)" evidence="1">
    <location>
        <begin position="225"/>
        <end position="251"/>
    </location>
</feature>
<comment type="function">
    <text evidence="1">Bifunctional enzyme with both catalase and broad-spectrum peroxidase activity.</text>
</comment>
<comment type="catalytic activity">
    <reaction evidence="1">
        <text>H2O2 + AH2 = A + 2 H2O</text>
        <dbReference type="Rhea" id="RHEA:30275"/>
        <dbReference type="ChEBI" id="CHEBI:13193"/>
        <dbReference type="ChEBI" id="CHEBI:15377"/>
        <dbReference type="ChEBI" id="CHEBI:16240"/>
        <dbReference type="ChEBI" id="CHEBI:17499"/>
        <dbReference type="EC" id="1.11.1.21"/>
    </reaction>
</comment>
<comment type="catalytic activity">
    <reaction evidence="1">
        <text>2 H2O2 = O2 + 2 H2O</text>
        <dbReference type="Rhea" id="RHEA:20309"/>
        <dbReference type="ChEBI" id="CHEBI:15377"/>
        <dbReference type="ChEBI" id="CHEBI:15379"/>
        <dbReference type="ChEBI" id="CHEBI:16240"/>
        <dbReference type="EC" id="1.11.1.21"/>
    </reaction>
</comment>
<comment type="cofactor">
    <cofactor evidence="1">
        <name>heme b</name>
        <dbReference type="ChEBI" id="CHEBI:60344"/>
    </cofactor>
    <text evidence="1">Binds 1 heme b (iron(II)-protoporphyrin IX) group per dimer.</text>
</comment>
<comment type="subunit">
    <text evidence="1">Homodimer or homotetramer.</text>
</comment>
<comment type="PTM">
    <text evidence="1">Formation of the three residue Trp-Tyr-Met cross-link is important for the catalase, but not the peroxidase activity of the enzyme.</text>
</comment>
<comment type="similarity">
    <text evidence="1">Belongs to the peroxidase family. Peroxidase/catalase subfamily.</text>
</comment>
<name>KATG_HYPNA</name>
<accession>Q0C0D1</accession>
<reference key="1">
    <citation type="journal article" date="2006" name="J. Bacteriol.">
        <title>Comparative genomic evidence for a close relationship between the dimorphic prosthecate bacteria Hyphomonas neptunium and Caulobacter crescentus.</title>
        <authorList>
            <person name="Badger J.H."/>
            <person name="Hoover T.R."/>
            <person name="Brun Y.V."/>
            <person name="Weiner R.M."/>
            <person name="Laub M.T."/>
            <person name="Alexandre G."/>
            <person name="Mrazek J."/>
            <person name="Ren Q."/>
            <person name="Paulsen I.T."/>
            <person name="Nelson K.E."/>
            <person name="Khouri H.M."/>
            <person name="Radune D."/>
            <person name="Sosa J."/>
            <person name="Dodson R.J."/>
            <person name="Sullivan S.A."/>
            <person name="Rosovitz M.J."/>
            <person name="Madupu R."/>
            <person name="Brinkac L.M."/>
            <person name="Durkin A.S."/>
            <person name="Daugherty S.C."/>
            <person name="Kothari S.P."/>
            <person name="Giglio M.G."/>
            <person name="Zhou L."/>
            <person name="Haft D.H."/>
            <person name="Selengut J.D."/>
            <person name="Davidsen T.M."/>
            <person name="Yang Q."/>
            <person name="Zafar N."/>
            <person name="Ward N.L."/>
        </authorList>
    </citation>
    <scope>NUCLEOTIDE SEQUENCE [LARGE SCALE GENOMIC DNA]</scope>
    <source>
        <strain>ATCC 15444</strain>
    </source>
</reference>
<evidence type="ECO:0000255" key="1">
    <source>
        <dbReference type="HAMAP-Rule" id="MF_01961"/>
    </source>
</evidence>